<proteinExistence type="inferred from homology"/>
<name>ISPT_CLOTE</name>
<evidence type="ECO:0000255" key="1">
    <source>
        <dbReference type="HAMAP-Rule" id="MF_01139"/>
    </source>
</evidence>
<sequence length="255" mass="29820">MWNIFKNKSGQSHKVKDKFQLDLDNIPKHIAIIMDGNGRWAKERKLPRSLGHKAGVETIRDIVKECNNIGVRYLTLYAFSTENWKRPKEEINALMELLVNYLRKEVAELHQNNVVVNTIGDVSKLPKACEDELMKAYNKTKNNTGLVLNLALNYGGRDEIIRAIKLMYKDIEKKGLDIENVNEDLLKNYLYTKGMPDPDLIIRPSGEQRISNFLLWQCAYSEFWYSNIKWPDFKKHHLHKAIKDYQNRNRRFGGV</sequence>
<keyword id="KW-0460">Magnesium</keyword>
<keyword id="KW-0479">Metal-binding</keyword>
<keyword id="KW-1185">Reference proteome</keyword>
<keyword id="KW-0808">Transferase</keyword>
<feature type="chain" id="PRO_0000123600" description="Isoprenyl transferase">
    <location>
        <begin position="1"/>
        <end position="255"/>
    </location>
</feature>
<feature type="active site" evidence="1">
    <location>
        <position position="35"/>
    </location>
</feature>
<feature type="active site" description="Proton acceptor" evidence="1">
    <location>
        <position position="83"/>
    </location>
</feature>
<feature type="binding site" evidence="1">
    <location>
        <position position="35"/>
    </location>
    <ligand>
        <name>Mg(2+)</name>
        <dbReference type="ChEBI" id="CHEBI:18420"/>
    </ligand>
</feature>
<feature type="binding site" evidence="1">
    <location>
        <begin position="36"/>
        <end position="39"/>
    </location>
    <ligand>
        <name>substrate</name>
    </ligand>
</feature>
<feature type="binding site" evidence="1">
    <location>
        <position position="40"/>
    </location>
    <ligand>
        <name>substrate</name>
    </ligand>
</feature>
<feature type="binding site" evidence="1">
    <location>
        <position position="48"/>
    </location>
    <ligand>
        <name>substrate</name>
    </ligand>
</feature>
<feature type="binding site" evidence="1">
    <location>
        <position position="52"/>
    </location>
    <ligand>
        <name>substrate</name>
    </ligand>
</feature>
<feature type="binding site" evidence="1">
    <location>
        <begin position="80"/>
        <end position="82"/>
    </location>
    <ligand>
        <name>substrate</name>
    </ligand>
</feature>
<feature type="binding site" evidence="1">
    <location>
        <position position="84"/>
    </location>
    <ligand>
        <name>substrate</name>
    </ligand>
</feature>
<feature type="binding site" evidence="1">
    <location>
        <position position="86"/>
    </location>
    <ligand>
        <name>substrate</name>
    </ligand>
</feature>
<feature type="binding site" evidence="1">
    <location>
        <position position="203"/>
    </location>
    <ligand>
        <name>substrate</name>
    </ligand>
</feature>
<feature type="binding site" evidence="1">
    <location>
        <begin position="209"/>
        <end position="211"/>
    </location>
    <ligand>
        <name>substrate</name>
    </ligand>
</feature>
<feature type="binding site" evidence="1">
    <location>
        <position position="222"/>
    </location>
    <ligand>
        <name>Mg(2+)</name>
        <dbReference type="ChEBI" id="CHEBI:18420"/>
    </ligand>
</feature>
<comment type="function">
    <text evidence="1">Catalyzes the condensation of isopentenyl diphosphate (IPP) with allylic pyrophosphates generating different type of terpenoids.</text>
</comment>
<comment type="cofactor">
    <cofactor evidence="1">
        <name>Mg(2+)</name>
        <dbReference type="ChEBI" id="CHEBI:18420"/>
    </cofactor>
    <text evidence="1">Binds 2 magnesium ions per subunit.</text>
</comment>
<comment type="subunit">
    <text evidence="1">Homodimer.</text>
</comment>
<comment type="similarity">
    <text evidence="1">Belongs to the UPP synthase family.</text>
</comment>
<reference key="1">
    <citation type="journal article" date="2003" name="Proc. Natl. Acad. Sci. U.S.A.">
        <title>The genome sequence of Clostridium tetani, the causative agent of tetanus disease.</title>
        <authorList>
            <person name="Brueggemann H."/>
            <person name="Baeumer S."/>
            <person name="Fricke W.F."/>
            <person name="Wiezer A."/>
            <person name="Liesegang H."/>
            <person name="Decker I."/>
            <person name="Herzberg C."/>
            <person name="Martinez-Arias R."/>
            <person name="Merkl R."/>
            <person name="Henne A."/>
            <person name="Gottschalk G."/>
        </authorList>
    </citation>
    <scope>NUCLEOTIDE SEQUENCE [LARGE SCALE GENOMIC DNA]</scope>
    <source>
        <strain>Massachusetts / E88</strain>
    </source>
</reference>
<gene>
    <name evidence="1" type="primary">uppS</name>
    <name type="ordered locus">CTC_01265</name>
</gene>
<dbReference type="EC" id="2.5.1.-" evidence="1"/>
<dbReference type="EMBL" id="AE015927">
    <property type="protein sequence ID" value="AAO35832.1"/>
    <property type="molecule type" value="Genomic_DNA"/>
</dbReference>
<dbReference type="RefSeq" id="WP_011099494.1">
    <property type="nucleotide sequence ID" value="NC_004557.1"/>
</dbReference>
<dbReference type="SMR" id="Q895K8"/>
<dbReference type="STRING" id="212717.CTC_01265"/>
<dbReference type="GeneID" id="24252936"/>
<dbReference type="KEGG" id="ctc:CTC_01265"/>
<dbReference type="HOGENOM" id="CLU_038505_1_1_9"/>
<dbReference type="OrthoDB" id="4191603at2"/>
<dbReference type="Proteomes" id="UP000001412">
    <property type="component" value="Chromosome"/>
</dbReference>
<dbReference type="GO" id="GO:0005829">
    <property type="term" value="C:cytosol"/>
    <property type="evidence" value="ECO:0007669"/>
    <property type="project" value="TreeGrafter"/>
</dbReference>
<dbReference type="GO" id="GO:0008834">
    <property type="term" value="F:ditrans,polycis-undecaprenyl-diphosphate synthase [(2E,6E)-farnesyl-diphosphate specific] activity"/>
    <property type="evidence" value="ECO:0007669"/>
    <property type="project" value="TreeGrafter"/>
</dbReference>
<dbReference type="GO" id="GO:0000287">
    <property type="term" value="F:magnesium ion binding"/>
    <property type="evidence" value="ECO:0007669"/>
    <property type="project" value="UniProtKB-UniRule"/>
</dbReference>
<dbReference type="GO" id="GO:0030145">
    <property type="term" value="F:manganese ion binding"/>
    <property type="evidence" value="ECO:0007669"/>
    <property type="project" value="TreeGrafter"/>
</dbReference>
<dbReference type="GO" id="GO:0016094">
    <property type="term" value="P:polyprenol biosynthetic process"/>
    <property type="evidence" value="ECO:0007669"/>
    <property type="project" value="TreeGrafter"/>
</dbReference>
<dbReference type="CDD" id="cd00475">
    <property type="entry name" value="Cis_IPPS"/>
    <property type="match status" value="1"/>
</dbReference>
<dbReference type="FunFam" id="3.40.1180.10:FF:000001">
    <property type="entry name" value="(2E,6E)-farnesyl-diphosphate-specific ditrans,polycis-undecaprenyl-diphosphate synthase"/>
    <property type="match status" value="1"/>
</dbReference>
<dbReference type="Gene3D" id="3.40.1180.10">
    <property type="entry name" value="Decaprenyl diphosphate synthase-like"/>
    <property type="match status" value="1"/>
</dbReference>
<dbReference type="HAMAP" id="MF_01139">
    <property type="entry name" value="ISPT"/>
    <property type="match status" value="1"/>
</dbReference>
<dbReference type="InterPro" id="IPR001441">
    <property type="entry name" value="UPP_synth-like"/>
</dbReference>
<dbReference type="InterPro" id="IPR018520">
    <property type="entry name" value="UPP_synth-like_CS"/>
</dbReference>
<dbReference type="InterPro" id="IPR036424">
    <property type="entry name" value="UPP_synth-like_sf"/>
</dbReference>
<dbReference type="NCBIfam" id="NF011405">
    <property type="entry name" value="PRK14830.1"/>
    <property type="match status" value="1"/>
</dbReference>
<dbReference type="NCBIfam" id="TIGR00055">
    <property type="entry name" value="uppS"/>
    <property type="match status" value="1"/>
</dbReference>
<dbReference type="PANTHER" id="PTHR10291:SF0">
    <property type="entry name" value="DEHYDRODOLICHYL DIPHOSPHATE SYNTHASE 2"/>
    <property type="match status" value="1"/>
</dbReference>
<dbReference type="PANTHER" id="PTHR10291">
    <property type="entry name" value="DEHYDRODOLICHYL DIPHOSPHATE SYNTHASE FAMILY MEMBER"/>
    <property type="match status" value="1"/>
</dbReference>
<dbReference type="Pfam" id="PF01255">
    <property type="entry name" value="Prenyltransf"/>
    <property type="match status" value="1"/>
</dbReference>
<dbReference type="SUPFAM" id="SSF64005">
    <property type="entry name" value="Undecaprenyl diphosphate synthase"/>
    <property type="match status" value="1"/>
</dbReference>
<dbReference type="PROSITE" id="PS01066">
    <property type="entry name" value="UPP_SYNTHASE"/>
    <property type="match status" value="1"/>
</dbReference>
<protein>
    <recommendedName>
        <fullName evidence="1">Isoprenyl transferase</fullName>
        <ecNumber evidence="1">2.5.1.-</ecNumber>
    </recommendedName>
</protein>
<organism>
    <name type="scientific">Clostridium tetani (strain Massachusetts / E88)</name>
    <dbReference type="NCBI Taxonomy" id="212717"/>
    <lineage>
        <taxon>Bacteria</taxon>
        <taxon>Bacillati</taxon>
        <taxon>Bacillota</taxon>
        <taxon>Clostridia</taxon>
        <taxon>Eubacteriales</taxon>
        <taxon>Clostridiaceae</taxon>
        <taxon>Clostridium</taxon>
    </lineage>
</organism>
<accession>Q895K8</accession>